<evidence type="ECO:0000255" key="1">
    <source>
        <dbReference type="HAMAP-Rule" id="MF_00433"/>
    </source>
</evidence>
<geneLocation type="chloroplast"/>
<gene>
    <name evidence="1" type="primary">petL</name>
</gene>
<organism>
    <name type="scientific">Acorus gramineus</name>
    <name type="common">Dwarf sweet flag</name>
    <dbReference type="NCBI Taxonomy" id="55184"/>
    <lineage>
        <taxon>Eukaryota</taxon>
        <taxon>Viridiplantae</taxon>
        <taxon>Streptophyta</taxon>
        <taxon>Embryophyta</taxon>
        <taxon>Tracheophyta</taxon>
        <taxon>Spermatophyta</taxon>
        <taxon>Magnoliopsida</taxon>
        <taxon>Liliopsida</taxon>
        <taxon>Acoraceae</taxon>
        <taxon>Acorus</taxon>
    </lineage>
</organism>
<feature type="chain" id="PRO_0000220433" description="Cytochrome b6-f complex subunit 6">
    <location>
        <begin position="1"/>
        <end position="31"/>
    </location>
</feature>
<feature type="transmembrane region" description="Helical" evidence="1">
    <location>
        <begin position="4"/>
        <end position="26"/>
    </location>
</feature>
<sequence length="31" mass="3361">MPTITSYFGFLLAASTITTALFIGLSKIRLI</sequence>
<reference key="1">
    <citation type="journal article" date="2004" name="BMC Evol. Biol.">
        <title>Long branch attraction, taxon sampling, and the earliest angiosperms: Amborella or monocots?</title>
        <authorList>
            <person name="Stefanovic S."/>
            <person name="Rice D.W."/>
            <person name="Palmer J.D."/>
        </authorList>
    </citation>
    <scope>NUCLEOTIDE SEQUENCE [GENOMIC DNA]</scope>
</reference>
<protein>
    <recommendedName>
        <fullName evidence="1">Cytochrome b6-f complex subunit 6</fullName>
    </recommendedName>
    <alternativeName>
        <fullName evidence="1">Cytochrome b6-f complex subunit PetL</fullName>
    </alternativeName>
    <alternativeName>
        <fullName evidence="1">Cytochrome b6-f complex subunit VI</fullName>
    </alternativeName>
</protein>
<accession>Q5QA80</accession>
<proteinExistence type="inferred from homology"/>
<keyword id="KW-0150">Chloroplast</keyword>
<keyword id="KW-0249">Electron transport</keyword>
<keyword id="KW-0472">Membrane</keyword>
<keyword id="KW-0602">Photosynthesis</keyword>
<keyword id="KW-0934">Plastid</keyword>
<keyword id="KW-0793">Thylakoid</keyword>
<keyword id="KW-0812">Transmembrane</keyword>
<keyword id="KW-1133">Transmembrane helix</keyword>
<keyword id="KW-0813">Transport</keyword>
<dbReference type="EMBL" id="AY757815">
    <property type="protein sequence ID" value="AAV74353.1"/>
    <property type="molecule type" value="Genomic_DNA"/>
</dbReference>
<dbReference type="RefSeq" id="YP_009117692.1">
    <property type="nucleotide sequence ID" value="NC_026299.1"/>
</dbReference>
<dbReference type="SMR" id="Q5QA80"/>
<dbReference type="GeneID" id="22975410"/>
<dbReference type="GO" id="GO:0009535">
    <property type="term" value="C:chloroplast thylakoid membrane"/>
    <property type="evidence" value="ECO:0007669"/>
    <property type="project" value="UniProtKB-SubCell"/>
</dbReference>
<dbReference type="GO" id="GO:0009512">
    <property type="term" value="C:cytochrome b6f complex"/>
    <property type="evidence" value="ECO:0007669"/>
    <property type="project" value="InterPro"/>
</dbReference>
<dbReference type="GO" id="GO:0045158">
    <property type="term" value="F:electron transporter, transferring electrons within cytochrome b6/f complex of photosystem II activity"/>
    <property type="evidence" value="ECO:0007669"/>
    <property type="project" value="UniProtKB-UniRule"/>
</dbReference>
<dbReference type="GO" id="GO:0015979">
    <property type="term" value="P:photosynthesis"/>
    <property type="evidence" value="ECO:0007669"/>
    <property type="project" value="UniProtKB-KW"/>
</dbReference>
<dbReference type="HAMAP" id="MF_00433">
    <property type="entry name" value="Cytb6_f_PetL"/>
    <property type="match status" value="1"/>
</dbReference>
<dbReference type="InterPro" id="IPR007802">
    <property type="entry name" value="Cyt_b6/f_cplx_su6"/>
</dbReference>
<dbReference type="PANTHER" id="PTHR37266">
    <property type="entry name" value="CYTOCHROME B6-F COMPLEX SUBUNIT 6"/>
    <property type="match status" value="1"/>
</dbReference>
<dbReference type="PANTHER" id="PTHR37266:SF1">
    <property type="entry name" value="CYTOCHROME B6-F COMPLEX SUBUNIT 6"/>
    <property type="match status" value="1"/>
</dbReference>
<dbReference type="Pfam" id="PF05115">
    <property type="entry name" value="PetL"/>
    <property type="match status" value="1"/>
</dbReference>
<name>PETL_ACOGR</name>
<comment type="function">
    <text evidence="1">Component of the cytochrome b6-f complex, which mediates electron transfer between photosystem II (PSII) and photosystem I (PSI), cyclic electron flow around PSI, and state transitions. PetL is important for photoautotrophic growth as well as for electron transfer efficiency and stability of the cytochrome b6-f complex.</text>
</comment>
<comment type="subunit">
    <text evidence="1">The 4 large subunits of the cytochrome b6-f complex are cytochrome b6, subunit IV (17 kDa polypeptide, PetD), cytochrome f and the Rieske protein, while the 4 small subunits are PetG, PetL, PetM and PetN. The complex functions as a dimer.</text>
</comment>
<comment type="subcellular location">
    <subcellularLocation>
        <location evidence="1">Plastid</location>
        <location evidence="1">Chloroplast thylakoid membrane</location>
        <topology evidence="1">Single-pass membrane protein</topology>
    </subcellularLocation>
</comment>
<comment type="similarity">
    <text evidence="1">Belongs to the PetL family.</text>
</comment>